<reference key="1">
    <citation type="journal article" date="2009" name="BMC Genomics">
        <title>Complete genome sequence of the sugarcane nitrogen-fixing endophyte Gluconacetobacter diazotrophicus Pal5.</title>
        <authorList>
            <person name="Bertalan M."/>
            <person name="Albano R."/>
            <person name="de Padua V."/>
            <person name="Rouws L."/>
            <person name="Rojas C."/>
            <person name="Hemerly A."/>
            <person name="Teixeira K."/>
            <person name="Schwab S."/>
            <person name="Araujo J."/>
            <person name="Oliveira A."/>
            <person name="Franca L."/>
            <person name="Magalhaes V."/>
            <person name="Alqueres S."/>
            <person name="Cardoso A."/>
            <person name="Almeida W."/>
            <person name="Loureiro M.M."/>
            <person name="Nogueira E."/>
            <person name="Cidade D."/>
            <person name="Oliveira D."/>
            <person name="Simao T."/>
            <person name="Macedo J."/>
            <person name="Valadao A."/>
            <person name="Dreschsel M."/>
            <person name="Freitas F."/>
            <person name="Vidal M."/>
            <person name="Guedes H."/>
            <person name="Rodrigues E."/>
            <person name="Meneses C."/>
            <person name="Brioso P."/>
            <person name="Pozzer L."/>
            <person name="Figueiredo D."/>
            <person name="Montano H."/>
            <person name="Junior J."/>
            <person name="de Souza Filho G."/>
            <person name="Martin Quintana Flores V."/>
            <person name="Ferreira B."/>
            <person name="Branco A."/>
            <person name="Gonzalez P."/>
            <person name="Guillobel H."/>
            <person name="Lemos M."/>
            <person name="Seibel L."/>
            <person name="Macedo J."/>
            <person name="Alves-Ferreira M."/>
            <person name="Sachetto-Martins G."/>
            <person name="Coelho A."/>
            <person name="Santos E."/>
            <person name="Amaral G."/>
            <person name="Neves A."/>
            <person name="Pacheco A.B."/>
            <person name="Carvalho D."/>
            <person name="Lery L."/>
            <person name="Bisch P."/>
            <person name="Rossle S.C."/>
            <person name="Urmenyi T."/>
            <person name="Rael Pereira A."/>
            <person name="Silva R."/>
            <person name="Rondinelli E."/>
            <person name="von Kruger W."/>
            <person name="Martins O."/>
            <person name="Baldani J.I."/>
            <person name="Ferreira P.C."/>
        </authorList>
    </citation>
    <scope>NUCLEOTIDE SEQUENCE [LARGE SCALE GENOMIC DNA]</scope>
    <source>
        <strain>ATCC 49037 / DSM 5601 / CCUG 37298 / CIP 103539 / LMG 7603 / PAl5</strain>
    </source>
</reference>
<reference key="2">
    <citation type="journal article" date="2010" name="Stand. Genomic Sci.">
        <title>Two genome sequences of the same bacterial strain, Gluconacetobacter diazotrophicus PAl 5, suggest a new standard in genome sequence submission.</title>
        <authorList>
            <person name="Giongo A."/>
            <person name="Tyler H.L."/>
            <person name="Zipperer U.N."/>
            <person name="Triplett E.W."/>
        </authorList>
    </citation>
    <scope>NUCLEOTIDE SEQUENCE [LARGE SCALE GENOMIC DNA]</scope>
    <source>
        <strain>ATCC 49037 / DSM 5601 / CCUG 37298 / CIP 103539 / LMG 7603 / PAl5</strain>
    </source>
</reference>
<comment type="function">
    <text evidence="1">Catalyzes the oxidation of 5,10-methylenetetrahydrofolate to 5,10-methenyltetrahydrofolate and then the hydrolysis of 5,10-methenyltetrahydrofolate to 10-formyltetrahydrofolate.</text>
</comment>
<comment type="catalytic activity">
    <reaction evidence="1">
        <text>(6R)-5,10-methylene-5,6,7,8-tetrahydrofolate + NADP(+) = (6R)-5,10-methenyltetrahydrofolate + NADPH</text>
        <dbReference type="Rhea" id="RHEA:22812"/>
        <dbReference type="ChEBI" id="CHEBI:15636"/>
        <dbReference type="ChEBI" id="CHEBI:57455"/>
        <dbReference type="ChEBI" id="CHEBI:57783"/>
        <dbReference type="ChEBI" id="CHEBI:58349"/>
        <dbReference type="EC" id="1.5.1.5"/>
    </reaction>
</comment>
<comment type="catalytic activity">
    <reaction evidence="1">
        <text>(6R)-5,10-methenyltetrahydrofolate + H2O = (6R)-10-formyltetrahydrofolate + H(+)</text>
        <dbReference type="Rhea" id="RHEA:23700"/>
        <dbReference type="ChEBI" id="CHEBI:15377"/>
        <dbReference type="ChEBI" id="CHEBI:15378"/>
        <dbReference type="ChEBI" id="CHEBI:57455"/>
        <dbReference type="ChEBI" id="CHEBI:195366"/>
        <dbReference type="EC" id="3.5.4.9"/>
    </reaction>
</comment>
<comment type="pathway">
    <text evidence="1">One-carbon metabolism; tetrahydrofolate interconversion.</text>
</comment>
<comment type="subunit">
    <text evidence="1">Homodimer.</text>
</comment>
<comment type="similarity">
    <text evidence="1">Belongs to the tetrahydrofolate dehydrogenase/cyclohydrolase family.</text>
</comment>
<proteinExistence type="inferred from homology"/>
<protein>
    <recommendedName>
        <fullName evidence="1">Bifunctional protein FolD</fullName>
    </recommendedName>
    <domain>
        <recommendedName>
            <fullName evidence="1">Methylenetetrahydrofolate dehydrogenase</fullName>
            <ecNumber evidence="1">1.5.1.5</ecNumber>
        </recommendedName>
    </domain>
    <domain>
        <recommendedName>
            <fullName evidence="1">Methenyltetrahydrofolate cyclohydrolase</fullName>
            <ecNumber evidence="1">3.5.4.9</ecNumber>
        </recommendedName>
    </domain>
</protein>
<evidence type="ECO:0000255" key="1">
    <source>
        <dbReference type="HAMAP-Rule" id="MF_01576"/>
    </source>
</evidence>
<name>FOLD_GLUDA</name>
<feature type="chain" id="PRO_0000340581" description="Bifunctional protein FolD">
    <location>
        <begin position="1"/>
        <end position="311"/>
    </location>
</feature>
<feature type="binding site" evidence="1">
    <location>
        <begin position="184"/>
        <end position="186"/>
    </location>
    <ligand>
        <name>NADP(+)</name>
        <dbReference type="ChEBI" id="CHEBI:58349"/>
    </ligand>
</feature>
<feature type="binding site" evidence="1">
    <location>
        <position position="209"/>
    </location>
    <ligand>
        <name>NADP(+)</name>
        <dbReference type="ChEBI" id="CHEBI:58349"/>
    </ligand>
</feature>
<feature type="binding site" evidence="1">
    <location>
        <position position="250"/>
    </location>
    <ligand>
        <name>NADP(+)</name>
        <dbReference type="ChEBI" id="CHEBI:58349"/>
    </ligand>
</feature>
<organism>
    <name type="scientific">Gluconacetobacter diazotrophicus (strain ATCC 49037 / DSM 5601 / CCUG 37298 / CIP 103539 / LMG 7603 / PAl5)</name>
    <dbReference type="NCBI Taxonomy" id="272568"/>
    <lineage>
        <taxon>Bacteria</taxon>
        <taxon>Pseudomonadati</taxon>
        <taxon>Pseudomonadota</taxon>
        <taxon>Alphaproteobacteria</taxon>
        <taxon>Acetobacterales</taxon>
        <taxon>Acetobacteraceae</taxon>
        <taxon>Gluconacetobacter</taxon>
    </lineage>
</organism>
<sequence>MTDRTTDPVPAEPAPVRHPTARLIDGKAFAANLTQTIARDVQSFHDRYRVTPGLAVVLVGNDPASEVYVRNKALQTHRAGMRSFMHMLPATTSQAELLALIGRLNADPEIHGILVQLPLPAGLDPVAVTNAILPDKDVDGLGEVNAGRLALGQPGIVPCTPLGCLMLLKSELGDLRGLHAVIIGASNLVGRPMARLLLAEGCTVTVGHIDTRDPAALARQGDILVVATGCHGLVRGDWIKPGAAVIDVGITRISLPSGKTRLVGDVAFDEAVTRAGCITPVPGGVGPMTIACLLNNTLAAARRIVGATDAA</sequence>
<gene>
    <name evidence="1" type="primary">folD</name>
    <name type="ordered locus">GDI1305</name>
    <name type="ordered locus">Gdia_2015</name>
</gene>
<dbReference type="EC" id="1.5.1.5" evidence="1"/>
<dbReference type="EC" id="3.5.4.9" evidence="1"/>
<dbReference type="EMBL" id="AM889285">
    <property type="protein sequence ID" value="CAP55248.1"/>
    <property type="molecule type" value="Genomic_DNA"/>
</dbReference>
<dbReference type="EMBL" id="CP001189">
    <property type="protein sequence ID" value="ACI51775.1"/>
    <property type="molecule type" value="Genomic_DNA"/>
</dbReference>
<dbReference type="RefSeq" id="WP_012224541.1">
    <property type="nucleotide sequence ID" value="NC_010125.1"/>
</dbReference>
<dbReference type="SMR" id="A9HEL1"/>
<dbReference type="STRING" id="272568.GDI1305"/>
<dbReference type="KEGG" id="gdi:GDI1305"/>
<dbReference type="KEGG" id="gdj:Gdia_2015"/>
<dbReference type="eggNOG" id="COG0190">
    <property type="taxonomic scope" value="Bacteria"/>
</dbReference>
<dbReference type="HOGENOM" id="CLU_034045_2_1_5"/>
<dbReference type="OrthoDB" id="9803580at2"/>
<dbReference type="UniPathway" id="UPA00193"/>
<dbReference type="Proteomes" id="UP000001176">
    <property type="component" value="Chromosome"/>
</dbReference>
<dbReference type="GO" id="GO:0005829">
    <property type="term" value="C:cytosol"/>
    <property type="evidence" value="ECO:0007669"/>
    <property type="project" value="TreeGrafter"/>
</dbReference>
<dbReference type="GO" id="GO:0004477">
    <property type="term" value="F:methenyltetrahydrofolate cyclohydrolase activity"/>
    <property type="evidence" value="ECO:0007669"/>
    <property type="project" value="UniProtKB-UniRule"/>
</dbReference>
<dbReference type="GO" id="GO:0004488">
    <property type="term" value="F:methylenetetrahydrofolate dehydrogenase (NADP+) activity"/>
    <property type="evidence" value="ECO:0007669"/>
    <property type="project" value="UniProtKB-UniRule"/>
</dbReference>
<dbReference type="GO" id="GO:0000105">
    <property type="term" value="P:L-histidine biosynthetic process"/>
    <property type="evidence" value="ECO:0007669"/>
    <property type="project" value="UniProtKB-KW"/>
</dbReference>
<dbReference type="GO" id="GO:0009086">
    <property type="term" value="P:methionine biosynthetic process"/>
    <property type="evidence" value="ECO:0007669"/>
    <property type="project" value="UniProtKB-KW"/>
</dbReference>
<dbReference type="GO" id="GO:0006164">
    <property type="term" value="P:purine nucleotide biosynthetic process"/>
    <property type="evidence" value="ECO:0007669"/>
    <property type="project" value="UniProtKB-KW"/>
</dbReference>
<dbReference type="GO" id="GO:0035999">
    <property type="term" value="P:tetrahydrofolate interconversion"/>
    <property type="evidence" value="ECO:0007669"/>
    <property type="project" value="UniProtKB-UniRule"/>
</dbReference>
<dbReference type="CDD" id="cd01080">
    <property type="entry name" value="NAD_bind_m-THF_DH_Cyclohyd"/>
    <property type="match status" value="1"/>
</dbReference>
<dbReference type="FunFam" id="3.40.50.720:FF:000006">
    <property type="entry name" value="Bifunctional protein FolD"/>
    <property type="match status" value="1"/>
</dbReference>
<dbReference type="FunFam" id="3.40.50.10860:FF:000005">
    <property type="entry name" value="C-1-tetrahydrofolate synthase, cytoplasmic, putative"/>
    <property type="match status" value="1"/>
</dbReference>
<dbReference type="Gene3D" id="3.40.50.10860">
    <property type="entry name" value="Leucine Dehydrogenase, chain A, domain 1"/>
    <property type="match status" value="1"/>
</dbReference>
<dbReference type="Gene3D" id="3.40.50.720">
    <property type="entry name" value="NAD(P)-binding Rossmann-like Domain"/>
    <property type="match status" value="1"/>
</dbReference>
<dbReference type="HAMAP" id="MF_01576">
    <property type="entry name" value="THF_DHG_CYH"/>
    <property type="match status" value="1"/>
</dbReference>
<dbReference type="InterPro" id="IPR046346">
    <property type="entry name" value="Aminoacid_DH-like_N_sf"/>
</dbReference>
<dbReference type="InterPro" id="IPR036291">
    <property type="entry name" value="NAD(P)-bd_dom_sf"/>
</dbReference>
<dbReference type="InterPro" id="IPR000672">
    <property type="entry name" value="THF_DH/CycHdrlase"/>
</dbReference>
<dbReference type="InterPro" id="IPR020630">
    <property type="entry name" value="THF_DH/CycHdrlase_cat_dom"/>
</dbReference>
<dbReference type="InterPro" id="IPR020867">
    <property type="entry name" value="THF_DH/CycHdrlase_CS"/>
</dbReference>
<dbReference type="InterPro" id="IPR020631">
    <property type="entry name" value="THF_DH/CycHdrlase_NAD-bd_dom"/>
</dbReference>
<dbReference type="NCBIfam" id="NF010785">
    <property type="entry name" value="PRK14188.1"/>
    <property type="match status" value="1"/>
</dbReference>
<dbReference type="PANTHER" id="PTHR48099:SF5">
    <property type="entry name" value="C-1-TETRAHYDROFOLATE SYNTHASE, CYTOPLASMIC"/>
    <property type="match status" value="1"/>
</dbReference>
<dbReference type="PANTHER" id="PTHR48099">
    <property type="entry name" value="C-1-TETRAHYDROFOLATE SYNTHASE, CYTOPLASMIC-RELATED"/>
    <property type="match status" value="1"/>
</dbReference>
<dbReference type="Pfam" id="PF00763">
    <property type="entry name" value="THF_DHG_CYH"/>
    <property type="match status" value="1"/>
</dbReference>
<dbReference type="Pfam" id="PF02882">
    <property type="entry name" value="THF_DHG_CYH_C"/>
    <property type="match status" value="1"/>
</dbReference>
<dbReference type="PRINTS" id="PR00085">
    <property type="entry name" value="THFDHDRGNASE"/>
</dbReference>
<dbReference type="SUPFAM" id="SSF53223">
    <property type="entry name" value="Aminoacid dehydrogenase-like, N-terminal domain"/>
    <property type="match status" value="1"/>
</dbReference>
<dbReference type="SUPFAM" id="SSF51735">
    <property type="entry name" value="NAD(P)-binding Rossmann-fold domains"/>
    <property type="match status" value="1"/>
</dbReference>
<dbReference type="PROSITE" id="PS00766">
    <property type="entry name" value="THF_DHG_CYH_1"/>
    <property type="match status" value="1"/>
</dbReference>
<dbReference type="PROSITE" id="PS00767">
    <property type="entry name" value="THF_DHG_CYH_2"/>
    <property type="match status" value="1"/>
</dbReference>
<keyword id="KW-0028">Amino-acid biosynthesis</keyword>
<keyword id="KW-0368">Histidine biosynthesis</keyword>
<keyword id="KW-0378">Hydrolase</keyword>
<keyword id="KW-0486">Methionine biosynthesis</keyword>
<keyword id="KW-0511">Multifunctional enzyme</keyword>
<keyword id="KW-0521">NADP</keyword>
<keyword id="KW-0554">One-carbon metabolism</keyword>
<keyword id="KW-0560">Oxidoreductase</keyword>
<keyword id="KW-0658">Purine biosynthesis</keyword>
<keyword id="KW-1185">Reference proteome</keyword>
<accession>A9HEL1</accession>
<accession>B5ZDE5</accession>